<dbReference type="EMBL" id="CP000384">
    <property type="protein sequence ID" value="ABG08359.1"/>
    <property type="molecule type" value="Genomic_DNA"/>
</dbReference>
<dbReference type="SMR" id="Q1B9S5"/>
<dbReference type="KEGG" id="mmc:Mmcs_2251"/>
<dbReference type="HOGENOM" id="CLU_062974_2_2_11"/>
<dbReference type="BioCyc" id="MSP164756:G1G6O-2303-MONOMER"/>
<dbReference type="GO" id="GO:0005829">
    <property type="term" value="C:cytosol"/>
    <property type="evidence" value="ECO:0007669"/>
    <property type="project" value="TreeGrafter"/>
</dbReference>
<dbReference type="GO" id="GO:0003677">
    <property type="term" value="F:DNA binding"/>
    <property type="evidence" value="ECO:0007669"/>
    <property type="project" value="UniProtKB-UniRule"/>
</dbReference>
<dbReference type="GO" id="GO:0006355">
    <property type="term" value="P:regulation of DNA-templated transcription"/>
    <property type="evidence" value="ECO:0007669"/>
    <property type="project" value="UniProtKB-UniRule"/>
</dbReference>
<dbReference type="FunFam" id="1.10.10.200:FF:000002">
    <property type="entry name" value="Probable transcriptional regulatory protein CLM62_37755"/>
    <property type="match status" value="1"/>
</dbReference>
<dbReference type="FunFam" id="3.30.70.980:FF:000006">
    <property type="entry name" value="Probable transcriptional regulatory protein J113_18170"/>
    <property type="match status" value="1"/>
</dbReference>
<dbReference type="Gene3D" id="1.10.10.200">
    <property type="match status" value="1"/>
</dbReference>
<dbReference type="Gene3D" id="3.30.70.980">
    <property type="match status" value="2"/>
</dbReference>
<dbReference type="HAMAP" id="MF_00693">
    <property type="entry name" value="Transcrip_reg_TACO1"/>
    <property type="match status" value="1"/>
</dbReference>
<dbReference type="InterPro" id="IPR017856">
    <property type="entry name" value="Integrase-like_N"/>
</dbReference>
<dbReference type="InterPro" id="IPR048300">
    <property type="entry name" value="TACO1_YebC-like_2nd/3rd_dom"/>
</dbReference>
<dbReference type="InterPro" id="IPR049083">
    <property type="entry name" value="TACO1_YebC_N"/>
</dbReference>
<dbReference type="InterPro" id="IPR002876">
    <property type="entry name" value="Transcrip_reg_TACO1-like"/>
</dbReference>
<dbReference type="InterPro" id="IPR026564">
    <property type="entry name" value="Transcrip_reg_TACO1-like_dom3"/>
</dbReference>
<dbReference type="InterPro" id="IPR029072">
    <property type="entry name" value="YebC-like"/>
</dbReference>
<dbReference type="NCBIfam" id="NF001030">
    <property type="entry name" value="PRK00110.1"/>
    <property type="match status" value="1"/>
</dbReference>
<dbReference type="NCBIfam" id="NF009044">
    <property type="entry name" value="PRK12378.1"/>
    <property type="match status" value="1"/>
</dbReference>
<dbReference type="NCBIfam" id="TIGR01033">
    <property type="entry name" value="YebC/PmpR family DNA-binding transcriptional regulator"/>
    <property type="match status" value="1"/>
</dbReference>
<dbReference type="PANTHER" id="PTHR12532:SF6">
    <property type="entry name" value="TRANSCRIPTIONAL REGULATORY PROTEIN YEBC-RELATED"/>
    <property type="match status" value="1"/>
</dbReference>
<dbReference type="PANTHER" id="PTHR12532">
    <property type="entry name" value="TRANSLATIONAL ACTIVATOR OF CYTOCHROME C OXIDASE 1"/>
    <property type="match status" value="1"/>
</dbReference>
<dbReference type="Pfam" id="PF20772">
    <property type="entry name" value="TACO1_YebC_N"/>
    <property type="match status" value="1"/>
</dbReference>
<dbReference type="Pfam" id="PF01709">
    <property type="entry name" value="Transcrip_reg"/>
    <property type="match status" value="1"/>
</dbReference>
<dbReference type="SUPFAM" id="SSF75625">
    <property type="entry name" value="YebC-like"/>
    <property type="match status" value="1"/>
</dbReference>
<comment type="subcellular location">
    <subcellularLocation>
        <location evidence="1">Cytoplasm</location>
    </subcellularLocation>
</comment>
<comment type="similarity">
    <text evidence="1">Belongs to the TACO1 family.</text>
</comment>
<accession>Q1B9S5</accession>
<reference key="1">
    <citation type="submission" date="2006-06" db="EMBL/GenBank/DDBJ databases">
        <title>Complete sequence of chromosome of Mycobacterium sp. MCS.</title>
        <authorList>
            <consortium name="US DOE Joint Genome Institute"/>
            <person name="Copeland A."/>
            <person name="Lucas S."/>
            <person name="Lapidus A."/>
            <person name="Barry K."/>
            <person name="Detter J.C."/>
            <person name="Glavina del Rio T."/>
            <person name="Hammon N."/>
            <person name="Israni S."/>
            <person name="Dalin E."/>
            <person name="Tice H."/>
            <person name="Pitluck S."/>
            <person name="Martinez M."/>
            <person name="Schmutz J."/>
            <person name="Larimer F."/>
            <person name="Land M."/>
            <person name="Hauser L."/>
            <person name="Kyrpides N."/>
            <person name="Kim E."/>
            <person name="Miller C.D."/>
            <person name="Hughes J.E."/>
            <person name="Anderson A.J."/>
            <person name="Sims R.C."/>
            <person name="Richardson P."/>
        </authorList>
    </citation>
    <scope>NUCLEOTIDE SEQUENCE [LARGE SCALE GENOMIC DNA]</scope>
    <source>
        <strain>MCS</strain>
    </source>
</reference>
<feature type="chain" id="PRO_1000045341" description="Probable transcriptional regulatory protein Mmcs_2251">
    <location>
        <begin position="1"/>
        <end position="250"/>
    </location>
</feature>
<organism>
    <name type="scientific">Mycobacterium sp. (strain MCS)</name>
    <dbReference type="NCBI Taxonomy" id="164756"/>
    <lineage>
        <taxon>Bacteria</taxon>
        <taxon>Bacillati</taxon>
        <taxon>Actinomycetota</taxon>
        <taxon>Actinomycetes</taxon>
        <taxon>Mycobacteriales</taxon>
        <taxon>Mycobacteriaceae</taxon>
        <taxon>Mycobacterium</taxon>
    </lineage>
</organism>
<name>Y2251_MYCSS</name>
<sequence>MSGHSKWATTKHKKAIIDARRGKNFAKLIKNIEVAARTGGGDPGGNPTLYDAIQKAKKSSVPNDNIERARKRGAGEEAGGADWQTITYEGYGPNGVAVLIECLTDNRNRAAGEVRVAMTRNGGNMADPGSVSYLFSRKGVITLEKNGLSEDDVLMAVLEAGAEEVTDLGDSFEIISEPTDLVAVRTALQDAGIDYDSADASFQPSVTVPLDAEGARKVMKLVDALEDSDDVQDVYTNADIPDEILAQLEE</sequence>
<keyword id="KW-0963">Cytoplasm</keyword>
<keyword id="KW-0238">DNA-binding</keyword>
<keyword id="KW-0804">Transcription</keyword>
<keyword id="KW-0805">Transcription regulation</keyword>
<protein>
    <recommendedName>
        <fullName evidence="1">Probable transcriptional regulatory protein Mmcs_2251</fullName>
    </recommendedName>
</protein>
<evidence type="ECO:0000255" key="1">
    <source>
        <dbReference type="HAMAP-Rule" id="MF_00693"/>
    </source>
</evidence>
<gene>
    <name type="ordered locus">Mmcs_2251</name>
</gene>
<proteinExistence type="inferred from homology"/>